<proteinExistence type="inferred from homology"/>
<feature type="chain" id="PRO_1000148623" description="ATP synthase gamma chain">
    <location>
        <begin position="1"/>
        <end position="288"/>
    </location>
</feature>
<organism>
    <name type="scientific">Laribacter hongkongensis (strain HLHK9)</name>
    <dbReference type="NCBI Taxonomy" id="557598"/>
    <lineage>
        <taxon>Bacteria</taxon>
        <taxon>Pseudomonadati</taxon>
        <taxon>Pseudomonadota</taxon>
        <taxon>Betaproteobacteria</taxon>
        <taxon>Neisseriales</taxon>
        <taxon>Aquaspirillaceae</taxon>
        <taxon>Laribacter</taxon>
    </lineage>
</organism>
<comment type="function">
    <text evidence="1">Produces ATP from ADP in the presence of a proton gradient across the membrane. The gamma chain is believed to be important in regulating ATPase activity and the flow of protons through the CF(0) complex.</text>
</comment>
<comment type="subunit">
    <text evidence="1">F-type ATPases have 2 components, CF(1) - the catalytic core - and CF(0) - the membrane proton channel. CF(1) has five subunits: alpha(3), beta(3), gamma(1), delta(1), epsilon(1). CF(0) has three main subunits: a, b and c.</text>
</comment>
<comment type="subcellular location">
    <subcellularLocation>
        <location evidence="1">Cell inner membrane</location>
        <topology evidence="1">Peripheral membrane protein</topology>
    </subcellularLocation>
</comment>
<comment type="similarity">
    <text evidence="1">Belongs to the ATPase gamma chain family.</text>
</comment>
<keyword id="KW-0066">ATP synthesis</keyword>
<keyword id="KW-0997">Cell inner membrane</keyword>
<keyword id="KW-1003">Cell membrane</keyword>
<keyword id="KW-0139">CF(1)</keyword>
<keyword id="KW-0375">Hydrogen ion transport</keyword>
<keyword id="KW-0406">Ion transport</keyword>
<keyword id="KW-0472">Membrane</keyword>
<keyword id="KW-1185">Reference proteome</keyword>
<keyword id="KW-0813">Transport</keyword>
<name>ATPG_LARHH</name>
<reference key="1">
    <citation type="journal article" date="2009" name="PLoS Genet.">
        <title>The complete genome and proteome of Laribacter hongkongensis reveal potential mechanisms for adaptations to different temperatures and habitats.</title>
        <authorList>
            <person name="Woo P.C.Y."/>
            <person name="Lau S.K.P."/>
            <person name="Tse H."/>
            <person name="Teng J.L.L."/>
            <person name="Curreem S.O."/>
            <person name="Tsang A.K.L."/>
            <person name="Fan R.Y.Y."/>
            <person name="Wong G.K.M."/>
            <person name="Huang Y."/>
            <person name="Loman N.J."/>
            <person name="Snyder L.A.S."/>
            <person name="Cai J.J."/>
            <person name="Huang J.-D."/>
            <person name="Mak W."/>
            <person name="Pallen M.J."/>
            <person name="Lok S."/>
            <person name="Yuen K.-Y."/>
        </authorList>
    </citation>
    <scope>NUCLEOTIDE SEQUENCE [LARGE SCALE GENOMIC DNA]</scope>
    <source>
        <strain>HLHK9</strain>
    </source>
</reference>
<gene>
    <name evidence="1" type="primary">atpG</name>
    <name type="ordered locus">LHK_03002</name>
</gene>
<accession>C1D5G3</accession>
<dbReference type="EMBL" id="CP001154">
    <property type="protein sequence ID" value="ACO75980.1"/>
    <property type="molecule type" value="Genomic_DNA"/>
</dbReference>
<dbReference type="RefSeq" id="WP_012698443.1">
    <property type="nucleotide sequence ID" value="NC_012559.1"/>
</dbReference>
<dbReference type="SMR" id="C1D5G3"/>
<dbReference type="STRING" id="557598.LHK_03002"/>
<dbReference type="GeneID" id="75108222"/>
<dbReference type="KEGG" id="lhk:LHK_03002"/>
<dbReference type="eggNOG" id="COG0224">
    <property type="taxonomic scope" value="Bacteria"/>
</dbReference>
<dbReference type="HOGENOM" id="CLU_050669_0_1_4"/>
<dbReference type="Proteomes" id="UP000002010">
    <property type="component" value="Chromosome"/>
</dbReference>
<dbReference type="GO" id="GO:0005886">
    <property type="term" value="C:plasma membrane"/>
    <property type="evidence" value="ECO:0007669"/>
    <property type="project" value="UniProtKB-SubCell"/>
</dbReference>
<dbReference type="GO" id="GO:0045259">
    <property type="term" value="C:proton-transporting ATP synthase complex"/>
    <property type="evidence" value="ECO:0007669"/>
    <property type="project" value="UniProtKB-KW"/>
</dbReference>
<dbReference type="GO" id="GO:0005524">
    <property type="term" value="F:ATP binding"/>
    <property type="evidence" value="ECO:0007669"/>
    <property type="project" value="UniProtKB-UniRule"/>
</dbReference>
<dbReference type="GO" id="GO:0046933">
    <property type="term" value="F:proton-transporting ATP synthase activity, rotational mechanism"/>
    <property type="evidence" value="ECO:0007669"/>
    <property type="project" value="UniProtKB-UniRule"/>
</dbReference>
<dbReference type="GO" id="GO:0042777">
    <property type="term" value="P:proton motive force-driven plasma membrane ATP synthesis"/>
    <property type="evidence" value="ECO:0007669"/>
    <property type="project" value="UniProtKB-UniRule"/>
</dbReference>
<dbReference type="CDD" id="cd12151">
    <property type="entry name" value="F1-ATPase_gamma"/>
    <property type="match status" value="1"/>
</dbReference>
<dbReference type="FunFam" id="1.10.287.80:FF:000005">
    <property type="entry name" value="ATP synthase gamma chain"/>
    <property type="match status" value="1"/>
</dbReference>
<dbReference type="Gene3D" id="3.40.1380.10">
    <property type="match status" value="1"/>
</dbReference>
<dbReference type="Gene3D" id="1.10.287.80">
    <property type="entry name" value="ATP synthase, gamma subunit, helix hairpin domain"/>
    <property type="match status" value="1"/>
</dbReference>
<dbReference type="HAMAP" id="MF_00815">
    <property type="entry name" value="ATP_synth_gamma_bact"/>
    <property type="match status" value="1"/>
</dbReference>
<dbReference type="InterPro" id="IPR035968">
    <property type="entry name" value="ATP_synth_F1_ATPase_gsu"/>
</dbReference>
<dbReference type="InterPro" id="IPR000131">
    <property type="entry name" value="ATP_synth_F1_gsu"/>
</dbReference>
<dbReference type="InterPro" id="IPR023632">
    <property type="entry name" value="ATP_synth_F1_gsu_CS"/>
</dbReference>
<dbReference type="NCBIfam" id="TIGR01146">
    <property type="entry name" value="ATPsyn_F1gamma"/>
    <property type="match status" value="1"/>
</dbReference>
<dbReference type="NCBIfam" id="NF004144">
    <property type="entry name" value="PRK05621.1-1"/>
    <property type="match status" value="1"/>
</dbReference>
<dbReference type="PANTHER" id="PTHR11693">
    <property type="entry name" value="ATP SYNTHASE GAMMA CHAIN"/>
    <property type="match status" value="1"/>
</dbReference>
<dbReference type="PANTHER" id="PTHR11693:SF22">
    <property type="entry name" value="ATP SYNTHASE SUBUNIT GAMMA, MITOCHONDRIAL"/>
    <property type="match status" value="1"/>
</dbReference>
<dbReference type="Pfam" id="PF00231">
    <property type="entry name" value="ATP-synt"/>
    <property type="match status" value="1"/>
</dbReference>
<dbReference type="PRINTS" id="PR00126">
    <property type="entry name" value="ATPASEGAMMA"/>
</dbReference>
<dbReference type="SUPFAM" id="SSF52943">
    <property type="entry name" value="ATP synthase (F1-ATPase), gamma subunit"/>
    <property type="match status" value="1"/>
</dbReference>
<dbReference type="PROSITE" id="PS00153">
    <property type="entry name" value="ATPASE_GAMMA"/>
    <property type="match status" value="1"/>
</dbReference>
<evidence type="ECO:0000255" key="1">
    <source>
        <dbReference type="HAMAP-Rule" id="MF_00815"/>
    </source>
</evidence>
<protein>
    <recommendedName>
        <fullName evidence="1">ATP synthase gamma chain</fullName>
    </recommendedName>
    <alternativeName>
        <fullName evidence="1">ATP synthase F1 sector gamma subunit</fullName>
    </alternativeName>
    <alternativeName>
        <fullName evidence="1">F-ATPase gamma subunit</fullName>
    </alternativeName>
</protein>
<sequence length="288" mass="32386">MAVGKEIRSKIKSVQSTQKITRAMQMVATSKMRKTQERMRSARPYAEKIREVMAHVAETNPDFKHPALERRDVVKRVGVILVTTDKGLCGGLNANALRTFYQYAERWAEQGIEVDVCCFGQKGYAALTRLDMKVVSSATQLGDTPQQEKLLGPASHIVRAYLDGEIDELHIVYSKFLNTMKQEPRVEQLLPLKTEELESEFPYSWDYLYEPDVRGVLDVLVRRYLESVVYQAVSENMASEQSARMVAMKAATDNAAQAIERLKLTYNKARQAAITTELSEICAGAAAV</sequence>